<dbReference type="EMBL" id="CP001338">
    <property type="protein sequence ID" value="ACL15909.1"/>
    <property type="molecule type" value="Genomic_DNA"/>
</dbReference>
<dbReference type="RefSeq" id="WP_012617228.1">
    <property type="nucleotide sequence ID" value="NC_011832.1"/>
</dbReference>
<dbReference type="SMR" id="B8GEU2"/>
<dbReference type="STRING" id="521011.Mpal_0536"/>
<dbReference type="GeneID" id="7271952"/>
<dbReference type="KEGG" id="mpl:Mpal_0536"/>
<dbReference type="eggNOG" id="arCOG04179">
    <property type="taxonomic scope" value="Archaea"/>
</dbReference>
<dbReference type="HOGENOM" id="CLU_122978_3_0_2"/>
<dbReference type="OrthoDB" id="7912at2157"/>
<dbReference type="Proteomes" id="UP000002457">
    <property type="component" value="Chromosome"/>
</dbReference>
<dbReference type="GO" id="GO:0005829">
    <property type="term" value="C:cytosol"/>
    <property type="evidence" value="ECO:0007669"/>
    <property type="project" value="TreeGrafter"/>
</dbReference>
<dbReference type="GO" id="GO:0003677">
    <property type="term" value="F:DNA binding"/>
    <property type="evidence" value="ECO:0007669"/>
    <property type="project" value="UniProtKB-UniRule"/>
</dbReference>
<dbReference type="Gene3D" id="1.10.8.140">
    <property type="entry name" value="PDCD5-like"/>
    <property type="match status" value="1"/>
</dbReference>
<dbReference type="HAMAP" id="MF_00026">
    <property type="entry name" value="dsDNA_bind"/>
    <property type="match status" value="1"/>
</dbReference>
<dbReference type="InterPro" id="IPR022889">
    <property type="entry name" value="DNA_bind_arc"/>
</dbReference>
<dbReference type="InterPro" id="IPR002836">
    <property type="entry name" value="PDCD5-like"/>
</dbReference>
<dbReference type="InterPro" id="IPR036883">
    <property type="entry name" value="PDCD5-like_sf"/>
</dbReference>
<dbReference type="NCBIfam" id="NF003268">
    <property type="entry name" value="PRK04239.1"/>
    <property type="match status" value="1"/>
</dbReference>
<dbReference type="PANTHER" id="PTHR10840">
    <property type="entry name" value="PROGRAMMED CELL DEATH PROTEIN 5"/>
    <property type="match status" value="1"/>
</dbReference>
<dbReference type="PANTHER" id="PTHR10840:SF0">
    <property type="entry name" value="PROGRAMMED CELL DEATH PROTEIN 5"/>
    <property type="match status" value="1"/>
</dbReference>
<dbReference type="Pfam" id="PF01984">
    <property type="entry name" value="dsDNA_bind"/>
    <property type="match status" value="1"/>
</dbReference>
<dbReference type="PIRSF" id="PIRSF015730">
    <property type="entry name" value="TFAR19"/>
    <property type="match status" value="1"/>
</dbReference>
<dbReference type="SUPFAM" id="SSF46950">
    <property type="entry name" value="Double-stranded DNA-binding domain"/>
    <property type="match status" value="1"/>
</dbReference>
<organism>
    <name type="scientific">Methanosphaerula palustris (strain ATCC BAA-1556 / DSM 19958 / E1-9c)</name>
    <dbReference type="NCBI Taxonomy" id="521011"/>
    <lineage>
        <taxon>Archaea</taxon>
        <taxon>Methanobacteriati</taxon>
        <taxon>Methanobacteriota</taxon>
        <taxon>Stenosarchaea group</taxon>
        <taxon>Methanomicrobia</taxon>
        <taxon>Methanomicrobiales</taxon>
        <taxon>Methanoregulaceae</taxon>
        <taxon>Methanosphaerula</taxon>
    </lineage>
</organism>
<comment type="similarity">
    <text evidence="1">Belongs to the PDCD5 family.</text>
</comment>
<accession>B8GEU2</accession>
<feature type="chain" id="PRO_1000192241" description="DNA-binding protein Mpal_0536">
    <location>
        <begin position="1"/>
        <end position="109"/>
    </location>
</feature>
<feature type="region of interest" description="Disordered" evidence="2">
    <location>
        <begin position="14"/>
        <end position="35"/>
    </location>
</feature>
<feature type="compositionally biased region" description="Low complexity" evidence="2">
    <location>
        <begin position="16"/>
        <end position="25"/>
    </location>
</feature>
<proteinExistence type="inferred from homology"/>
<evidence type="ECO:0000255" key="1">
    <source>
        <dbReference type="HAMAP-Rule" id="MF_00026"/>
    </source>
</evidence>
<evidence type="ECO:0000256" key="2">
    <source>
        <dbReference type="SAM" id="MobiDB-lite"/>
    </source>
</evidence>
<keyword id="KW-0238">DNA-binding</keyword>
<keyword id="KW-1185">Reference proteome</keyword>
<name>Y536_METPE</name>
<protein>
    <recommendedName>
        <fullName evidence="1">DNA-binding protein Mpal_0536</fullName>
    </recommendedName>
</protein>
<reference key="1">
    <citation type="journal article" date="2015" name="Genome Announc.">
        <title>Complete Genome Sequence of Methanosphaerula palustris E1-9CT, a Hydrogenotrophic Methanogen Isolated from a Minerotrophic Fen Peatland.</title>
        <authorList>
            <person name="Cadillo-Quiroz H."/>
            <person name="Browne P."/>
            <person name="Kyrpides N."/>
            <person name="Woyke T."/>
            <person name="Goodwin L."/>
            <person name="Detter C."/>
            <person name="Yavitt J.B."/>
            <person name="Zinder S.H."/>
        </authorList>
    </citation>
    <scope>NUCLEOTIDE SEQUENCE [LARGE SCALE GENOMIC DNA]</scope>
    <source>
        <strain>ATCC BAA-1556 / DSM 19958 / E1-9c</strain>
    </source>
</reference>
<gene>
    <name type="ordered locus">Mpal_0536</name>
</gene>
<sequence length="109" mass="12722">MGDDELAELRRRRMAQLQSQQMDQQQMDEEKQRAKSAMQMALMQILEPEARERLNTIRLTKPEFAAGVEQQLVMLAQSGRIKQKISDAQLKDLLRQLIPAKKDFNIVRK</sequence>